<keyword id="KW-1185">Reference proteome</keyword>
<keyword id="KW-0808">Transferase</keyword>
<reference key="1">
    <citation type="journal article" date="2008" name="J. Bacteriol.">
        <title>Genome sequence of the chemolithoautotrophic bacterium Oligotropha carboxidovorans OM5T.</title>
        <authorList>
            <person name="Paul D."/>
            <person name="Bridges S."/>
            <person name="Burgess S.C."/>
            <person name="Dandass Y."/>
            <person name="Lawrence M.L."/>
        </authorList>
    </citation>
    <scope>NUCLEOTIDE SEQUENCE [LARGE SCALE GENOMIC DNA]</scope>
    <source>
        <strain>ATCC 49405 / DSM 1227 / KCTC 32145 / OM5</strain>
    </source>
</reference>
<reference key="2">
    <citation type="journal article" date="2011" name="J. Bacteriol.">
        <title>Complete genome sequences of the chemolithoautotrophic Oligotropha carboxidovorans strains OM4 and OM5.</title>
        <authorList>
            <person name="Volland S."/>
            <person name="Rachinger M."/>
            <person name="Strittmatter A."/>
            <person name="Daniel R."/>
            <person name="Gottschalk G."/>
            <person name="Meyer O."/>
        </authorList>
    </citation>
    <scope>NUCLEOTIDE SEQUENCE [LARGE SCALE GENOMIC DNA]</scope>
    <source>
        <strain>ATCC 49405 / DSM 1227 / KCTC 32145 / OM5</strain>
    </source>
</reference>
<sequence length="424" mass="46189">MAKALNGVRILDFTHVQSGPTCTQLLAWFGADVIKVERPGTGDITRGQLQDVPNADSLYFTMLNHNKRSITLDAKNPKGKEVLTALIKSCDVMVENFAPGVLDRMGFSWENIQKINPKLIVASIKGFGPGPFEDCKVYENVAQCTGGSASTTGFRDGLPLVTGAQIGDSGTGLHLALGIVTALFHRTHSGKGQRVTVAMQDSVLNLCRVKMRDQQRLAHGPLKEYSQFGEGIPFGDATPRAGNDSGGGQPGRILKCKGWETDPNAYIYFITQAAVWEKICDVIGEPTWKTDPNYAKPGARLPRLNEIFGRIEQWTMTKTKFEVMNICNPFDIPCGPILSMKEIAEDKSLYATGTLVEVDHPTRGKYISVGNPIKLSDSPADVRRSPLLGEHTDEILRDVLKFSESQVSDIRSSGALGEVPLAAE</sequence>
<evidence type="ECO:0000250" key="1"/>
<evidence type="ECO:0000255" key="2">
    <source>
        <dbReference type="HAMAP-Rule" id="MF_00742"/>
    </source>
</evidence>
<comment type="function">
    <text evidence="1">Involved in the catabolism of oxalate and in the adapatation to low pH via the induction of the oxalate-dependent acid tolerance response (ATR). Catalyzes the transfer of the CoA moiety from formyl-CoA to oxalate (By similarity).</text>
</comment>
<comment type="catalytic activity">
    <reaction evidence="2">
        <text>formyl-CoA + oxalate = oxalyl-CoA + formate</text>
        <dbReference type="Rhea" id="RHEA:16545"/>
        <dbReference type="ChEBI" id="CHEBI:15740"/>
        <dbReference type="ChEBI" id="CHEBI:30623"/>
        <dbReference type="ChEBI" id="CHEBI:57376"/>
        <dbReference type="ChEBI" id="CHEBI:57388"/>
        <dbReference type="EC" id="2.8.3.16"/>
    </reaction>
</comment>
<comment type="pathway">
    <text evidence="2">Metabolic intermediate degradation; oxalate degradation; CO(2) and formate from oxalate: step 1/2.</text>
</comment>
<comment type="subunit">
    <text evidence="2">Homodimer.</text>
</comment>
<comment type="similarity">
    <text evidence="2">Belongs to the CoA-transferase III family. Frc subfamily.</text>
</comment>
<dbReference type="EC" id="2.8.3.16" evidence="2"/>
<dbReference type="EMBL" id="CP001196">
    <property type="protein sequence ID" value="ACI93662.1"/>
    <property type="molecule type" value="Genomic_DNA"/>
</dbReference>
<dbReference type="EMBL" id="CP002826">
    <property type="protein sequence ID" value="AEI06227.1"/>
    <property type="molecule type" value="Genomic_DNA"/>
</dbReference>
<dbReference type="RefSeq" id="WP_012563688.1">
    <property type="nucleotide sequence ID" value="NC_015684.1"/>
</dbReference>
<dbReference type="SMR" id="B6JE29"/>
<dbReference type="STRING" id="504832.OCA5_c15110"/>
<dbReference type="KEGG" id="oca:OCAR_6550"/>
<dbReference type="KEGG" id="ocg:OCA5_c15110"/>
<dbReference type="PATRIC" id="fig|504832.7.peg.1608"/>
<dbReference type="eggNOG" id="COG1804">
    <property type="taxonomic scope" value="Bacteria"/>
</dbReference>
<dbReference type="HOGENOM" id="CLU_033975_2_1_5"/>
<dbReference type="OrthoDB" id="9806585at2"/>
<dbReference type="UniPathway" id="UPA00540">
    <property type="reaction ID" value="UER00598"/>
</dbReference>
<dbReference type="Proteomes" id="UP000007730">
    <property type="component" value="Chromosome"/>
</dbReference>
<dbReference type="GO" id="GO:0033608">
    <property type="term" value="F:formyl-CoA transferase activity"/>
    <property type="evidence" value="ECO:0007669"/>
    <property type="project" value="UniProtKB-EC"/>
</dbReference>
<dbReference type="GO" id="GO:0033611">
    <property type="term" value="P:oxalate catabolic process"/>
    <property type="evidence" value="ECO:0007669"/>
    <property type="project" value="UniProtKB-UniRule"/>
</dbReference>
<dbReference type="Gene3D" id="3.40.50.10540">
    <property type="entry name" value="Crotonobetainyl-coa:carnitine coa-transferase, domain 1"/>
    <property type="match status" value="1"/>
</dbReference>
<dbReference type="Gene3D" id="3.30.1540.10">
    <property type="entry name" value="formyl-coa transferase, domain 3"/>
    <property type="match status" value="1"/>
</dbReference>
<dbReference type="HAMAP" id="MF_00742">
    <property type="entry name" value="Formyl_CoA_transfer"/>
    <property type="match status" value="1"/>
</dbReference>
<dbReference type="InterPro" id="IPR050483">
    <property type="entry name" value="CoA-transferase_III_domain"/>
</dbReference>
<dbReference type="InterPro" id="IPR003673">
    <property type="entry name" value="CoA-Trfase_fam_III"/>
</dbReference>
<dbReference type="InterPro" id="IPR044855">
    <property type="entry name" value="CoA-Trfase_III_dom3_sf"/>
</dbReference>
<dbReference type="InterPro" id="IPR023606">
    <property type="entry name" value="CoA-Trfase_III_dom_1_sf"/>
</dbReference>
<dbReference type="InterPro" id="IPR017659">
    <property type="entry name" value="Formyl_CoA_transfer"/>
</dbReference>
<dbReference type="NCBIfam" id="TIGR03253">
    <property type="entry name" value="oxalate_frc"/>
    <property type="match status" value="1"/>
</dbReference>
<dbReference type="NCBIfam" id="NF003809">
    <property type="entry name" value="PRK05398.1"/>
    <property type="match status" value="1"/>
</dbReference>
<dbReference type="PANTHER" id="PTHR48207">
    <property type="entry name" value="SUCCINATE--HYDROXYMETHYLGLUTARATE COA-TRANSFERASE"/>
    <property type="match status" value="1"/>
</dbReference>
<dbReference type="PANTHER" id="PTHR48207:SF3">
    <property type="entry name" value="SUCCINATE--HYDROXYMETHYLGLUTARATE COA-TRANSFERASE"/>
    <property type="match status" value="1"/>
</dbReference>
<dbReference type="Pfam" id="PF02515">
    <property type="entry name" value="CoA_transf_3"/>
    <property type="match status" value="1"/>
</dbReference>
<dbReference type="SUPFAM" id="SSF89796">
    <property type="entry name" value="CoA-transferase family III (CaiB/BaiF)"/>
    <property type="match status" value="1"/>
</dbReference>
<feature type="chain" id="PRO_1000189582" description="Formyl-CoA:oxalate CoA-transferase">
    <location>
        <begin position="1"/>
        <end position="424"/>
    </location>
</feature>
<feature type="active site" description="Nucleophile" evidence="2">
    <location>
        <position position="168"/>
    </location>
</feature>
<feature type="binding site" evidence="1">
    <location>
        <begin position="17"/>
        <end position="18"/>
    </location>
    <ligand>
        <name>CoA</name>
        <dbReference type="ChEBI" id="CHEBI:57287"/>
    </ligand>
</feature>
<feature type="binding site" evidence="2">
    <location>
        <position position="38"/>
    </location>
    <ligand>
        <name>CoA</name>
        <dbReference type="ChEBI" id="CHEBI:57287"/>
    </ligand>
</feature>
<feature type="binding site" evidence="1">
    <location>
        <begin position="96"/>
        <end position="98"/>
    </location>
    <ligand>
        <name>CoA</name>
        <dbReference type="ChEBI" id="CHEBI:57287"/>
    </ligand>
</feature>
<feature type="binding site" evidence="2">
    <location>
        <position position="104"/>
    </location>
    <ligand>
        <name>CoA</name>
        <dbReference type="ChEBI" id="CHEBI:57287"/>
    </ligand>
</feature>
<feature type="binding site" evidence="1">
    <location>
        <begin position="136"/>
        <end position="139"/>
    </location>
    <ligand>
        <name>CoA</name>
        <dbReference type="ChEBI" id="CHEBI:57287"/>
    </ligand>
</feature>
<feature type="binding site" evidence="1">
    <location>
        <begin position="247"/>
        <end position="249"/>
    </location>
    <ligand>
        <name>substrate</name>
    </ligand>
</feature>
<gene>
    <name evidence="2" type="primary">frc</name>
    <name type="ordered locus">OCAR_6550</name>
    <name type="ordered locus">OCA5_c15110</name>
</gene>
<organism>
    <name type="scientific">Afipia carboxidovorans (strain ATCC 49405 / DSM 1227 / KCTC 32145 / OM5)</name>
    <name type="common">Oligotropha carboxidovorans</name>
    <dbReference type="NCBI Taxonomy" id="504832"/>
    <lineage>
        <taxon>Bacteria</taxon>
        <taxon>Pseudomonadati</taxon>
        <taxon>Pseudomonadota</taxon>
        <taxon>Alphaproteobacteria</taxon>
        <taxon>Hyphomicrobiales</taxon>
        <taxon>Nitrobacteraceae</taxon>
        <taxon>Afipia</taxon>
    </lineage>
</organism>
<proteinExistence type="inferred from homology"/>
<protein>
    <recommendedName>
        <fullName>Formyl-CoA:oxalate CoA-transferase</fullName>
        <shortName>FCOCT</shortName>
        <ecNumber evidence="2">2.8.3.16</ecNumber>
    </recommendedName>
    <alternativeName>
        <fullName evidence="2">Formyl-coenzyme A transferase</fullName>
        <shortName evidence="2">Formyl-CoA transferase</shortName>
    </alternativeName>
</protein>
<accession>B6JE29</accession>
<accession>F8BYN2</accession>
<name>FCTA_AFIC5</name>